<comment type="function">
    <text evidence="1">Responsible for the transport of dicarboxylates such as succinate, fumarate, and malate from the periplasm across the membrane.</text>
</comment>
<comment type="subcellular location">
    <subcellularLocation>
        <location evidence="1">Cell inner membrane</location>
        <topology evidence="1">Multi-pass membrane protein</topology>
    </subcellularLocation>
</comment>
<comment type="similarity">
    <text evidence="3">Belongs to the dicarboxylate/amino acid:cation symporter (DAACS) (TC 2.A.23) family.</text>
</comment>
<keyword id="KW-0997">Cell inner membrane</keyword>
<keyword id="KW-1003">Cell membrane</keyword>
<keyword id="KW-0472">Membrane</keyword>
<keyword id="KW-1185">Reference proteome</keyword>
<keyword id="KW-0769">Symport</keyword>
<keyword id="KW-0812">Transmembrane</keyword>
<keyword id="KW-1133">Transmembrane helix</keyword>
<keyword id="KW-0813">Transport</keyword>
<protein>
    <recommendedName>
        <fullName>C4-dicarboxylate transport protein 1</fullName>
    </recommendedName>
</protein>
<name>DCTA1_RALN1</name>
<organism>
    <name type="scientific">Ralstonia nicotianae (strain ATCC BAA-1114 / GMI1000)</name>
    <name type="common">Ralstonia solanacearum</name>
    <dbReference type="NCBI Taxonomy" id="267608"/>
    <lineage>
        <taxon>Bacteria</taxon>
        <taxon>Pseudomonadati</taxon>
        <taxon>Pseudomonadota</taxon>
        <taxon>Betaproteobacteria</taxon>
        <taxon>Burkholderiales</taxon>
        <taxon>Burkholderiaceae</taxon>
        <taxon>Ralstonia</taxon>
        <taxon>Ralstonia solanacearum species complex</taxon>
    </lineage>
</organism>
<dbReference type="EMBL" id="AL646052">
    <property type="protein sequence ID" value="CAD13858.1"/>
    <property type="molecule type" value="Genomic_DNA"/>
</dbReference>
<dbReference type="RefSeq" id="WP_011000294.1">
    <property type="nucleotide sequence ID" value="NC_003295.1"/>
</dbReference>
<dbReference type="SMR" id="Q8Y2K5"/>
<dbReference type="STRING" id="267608.RSc0330"/>
<dbReference type="EnsemblBacteria" id="CAD13858">
    <property type="protein sequence ID" value="CAD13858"/>
    <property type="gene ID" value="RSc0330"/>
</dbReference>
<dbReference type="KEGG" id="rso:RSc0330"/>
<dbReference type="eggNOG" id="COG1301">
    <property type="taxonomic scope" value="Bacteria"/>
</dbReference>
<dbReference type="HOGENOM" id="CLU_019375_7_0_4"/>
<dbReference type="Proteomes" id="UP000001436">
    <property type="component" value="Chromosome"/>
</dbReference>
<dbReference type="GO" id="GO:0005886">
    <property type="term" value="C:plasma membrane"/>
    <property type="evidence" value="ECO:0007669"/>
    <property type="project" value="UniProtKB-SubCell"/>
</dbReference>
<dbReference type="GO" id="GO:0015138">
    <property type="term" value="F:fumarate transmembrane transporter activity"/>
    <property type="evidence" value="ECO:0007669"/>
    <property type="project" value="TreeGrafter"/>
</dbReference>
<dbReference type="GO" id="GO:0015366">
    <property type="term" value="F:malate:proton symporter activity"/>
    <property type="evidence" value="ECO:0007669"/>
    <property type="project" value="TreeGrafter"/>
</dbReference>
<dbReference type="GO" id="GO:0015141">
    <property type="term" value="F:succinate transmembrane transporter activity"/>
    <property type="evidence" value="ECO:0007669"/>
    <property type="project" value="TreeGrafter"/>
</dbReference>
<dbReference type="GO" id="GO:0070778">
    <property type="term" value="P:L-aspartate transmembrane transport"/>
    <property type="evidence" value="ECO:0007669"/>
    <property type="project" value="TreeGrafter"/>
</dbReference>
<dbReference type="FunFam" id="1.10.3860.10:FF:000001">
    <property type="entry name" value="C4-dicarboxylate transport protein"/>
    <property type="match status" value="1"/>
</dbReference>
<dbReference type="Gene3D" id="1.10.3860.10">
    <property type="entry name" value="Sodium:dicarboxylate symporter"/>
    <property type="match status" value="1"/>
</dbReference>
<dbReference type="HAMAP" id="MF_01300">
    <property type="entry name" value="C4_dicarb_transport"/>
    <property type="match status" value="1"/>
</dbReference>
<dbReference type="InterPro" id="IPR023954">
    <property type="entry name" value="C4_dicarb_transport"/>
</dbReference>
<dbReference type="InterPro" id="IPR001991">
    <property type="entry name" value="Na-dicarboxylate_symporter"/>
</dbReference>
<dbReference type="InterPro" id="IPR018107">
    <property type="entry name" value="Na-dicarboxylate_symporter_CS"/>
</dbReference>
<dbReference type="InterPro" id="IPR036458">
    <property type="entry name" value="Na:dicarbo_symporter_sf"/>
</dbReference>
<dbReference type="NCBIfam" id="NF002461">
    <property type="entry name" value="PRK01663.1"/>
    <property type="match status" value="1"/>
</dbReference>
<dbReference type="NCBIfam" id="NF009587">
    <property type="entry name" value="PRK13027.1"/>
    <property type="match status" value="1"/>
</dbReference>
<dbReference type="PANTHER" id="PTHR42865:SF1">
    <property type="entry name" value="AEROBIC C4-DICARBOXYLATE TRANSPORT PROTEIN"/>
    <property type="match status" value="1"/>
</dbReference>
<dbReference type="PANTHER" id="PTHR42865">
    <property type="entry name" value="PROTON/GLUTAMATE-ASPARTATE SYMPORTER"/>
    <property type="match status" value="1"/>
</dbReference>
<dbReference type="Pfam" id="PF00375">
    <property type="entry name" value="SDF"/>
    <property type="match status" value="1"/>
</dbReference>
<dbReference type="PRINTS" id="PR00173">
    <property type="entry name" value="EDTRNSPORT"/>
</dbReference>
<dbReference type="SUPFAM" id="SSF118215">
    <property type="entry name" value="Proton glutamate symport protein"/>
    <property type="match status" value="1"/>
</dbReference>
<dbReference type="PROSITE" id="PS00713">
    <property type="entry name" value="NA_DICARBOXYL_SYMP_1"/>
    <property type="match status" value="1"/>
</dbReference>
<dbReference type="PROSITE" id="PS00714">
    <property type="entry name" value="NA_DICARBOXYL_SYMP_2"/>
    <property type="match status" value="1"/>
</dbReference>
<gene>
    <name type="primary">dctA1</name>
    <name type="ordered locus">RSc0330</name>
    <name type="ORF">RS03297</name>
</gene>
<evidence type="ECO:0000250" key="1"/>
<evidence type="ECO:0000255" key="2"/>
<evidence type="ECO:0000305" key="3"/>
<accession>Q8Y2K5</accession>
<proteinExistence type="inferred from homology"/>
<sequence>MKKPFYKILYVQVLAAIVIGVLLGHFEPKLAVNMKPLGDGFIQLIKMVIGPIIFCTVVSGIAGMRDMKKVGRVGGKALLYFEVVSTFALVIGLVAGHIFNPGSGFNVDVNSIDAKAVAQYAAKAQSSSTVDFLLNIIPSTVVDAFAKGDILQILLIALLFGGALSAMGERAQMVTDFIDQIAHVFFRIVHVITRVAPIGAFGAMAFTIGKYGVVSLVPLLKLIGTFYLTAIIFVVVVLGIIARLTGFSIFRFVAYIKEELLIVLGTSSSESALPHLMEKMEKLGCSKSVVGLVVPTGYSFNLDGTNIYMTMAVIFISQALNIELTLTQQLTILAVAMLTSKGASGITGAGFITLAATLAVVPTIPVAGMVLILGIDRFMSECRALTNITGNGVACVVISAWERELDRTKLARVMSGDRGETVSATPAA</sequence>
<reference key="1">
    <citation type="journal article" date="2002" name="Nature">
        <title>Genome sequence of the plant pathogen Ralstonia solanacearum.</title>
        <authorList>
            <person name="Salanoubat M."/>
            <person name="Genin S."/>
            <person name="Artiguenave F."/>
            <person name="Gouzy J."/>
            <person name="Mangenot S."/>
            <person name="Arlat M."/>
            <person name="Billault A."/>
            <person name="Brottier P."/>
            <person name="Camus J.-C."/>
            <person name="Cattolico L."/>
            <person name="Chandler M."/>
            <person name="Choisne N."/>
            <person name="Claudel-Renard C."/>
            <person name="Cunnac S."/>
            <person name="Demange N."/>
            <person name="Gaspin C."/>
            <person name="Lavie M."/>
            <person name="Moisan A."/>
            <person name="Robert C."/>
            <person name="Saurin W."/>
            <person name="Schiex T."/>
            <person name="Siguier P."/>
            <person name="Thebault P."/>
            <person name="Whalen M."/>
            <person name="Wincker P."/>
            <person name="Levy M."/>
            <person name="Weissenbach J."/>
            <person name="Boucher C.A."/>
        </authorList>
    </citation>
    <scope>NUCLEOTIDE SEQUENCE [LARGE SCALE GENOMIC DNA]</scope>
    <source>
        <strain>ATCC BAA-1114 / GMI1000</strain>
    </source>
</reference>
<feature type="chain" id="PRO_0000202102" description="C4-dicarboxylate transport protein 1">
    <location>
        <begin position="1"/>
        <end position="428"/>
    </location>
</feature>
<feature type="transmembrane region" description="Helical" evidence="2">
    <location>
        <begin position="5"/>
        <end position="27"/>
    </location>
</feature>
<feature type="transmembrane region" description="Helical" evidence="2">
    <location>
        <begin position="42"/>
        <end position="64"/>
    </location>
</feature>
<feature type="transmembrane region" description="Helical" evidence="2">
    <location>
        <begin position="77"/>
        <end position="99"/>
    </location>
</feature>
<feature type="transmembrane region" description="Helical" evidence="2">
    <location>
        <begin position="150"/>
        <end position="167"/>
    </location>
</feature>
<feature type="transmembrane region" description="Helical" evidence="2">
    <location>
        <begin position="188"/>
        <end position="210"/>
    </location>
</feature>
<feature type="transmembrane region" description="Helical" evidence="2">
    <location>
        <begin position="225"/>
        <end position="247"/>
    </location>
</feature>
<feature type="transmembrane region" description="Helical" evidence="2">
    <location>
        <begin position="314"/>
        <end position="336"/>
    </location>
</feature>
<feature type="transmembrane region" description="Helical" evidence="2">
    <location>
        <begin position="351"/>
        <end position="373"/>
    </location>
</feature>